<protein>
    <recommendedName>
        <fullName evidence="1">Thymidylate synthase</fullName>
        <shortName evidence="1">TS</shortName>
        <shortName evidence="1">TSase</shortName>
        <ecNumber evidence="1">2.1.1.45</ecNumber>
    </recommendedName>
</protein>
<name>TYSY_AERS4</name>
<accession>A4SIW7</accession>
<reference key="1">
    <citation type="journal article" date="2008" name="BMC Genomics">
        <title>The genome of Aeromonas salmonicida subsp. salmonicida A449: insights into the evolution of a fish pathogen.</title>
        <authorList>
            <person name="Reith M.E."/>
            <person name="Singh R.K."/>
            <person name="Curtis B."/>
            <person name="Boyd J.M."/>
            <person name="Bouevitch A."/>
            <person name="Kimball J."/>
            <person name="Munholland J."/>
            <person name="Murphy C."/>
            <person name="Sarty D."/>
            <person name="Williams J."/>
            <person name="Nash J.H."/>
            <person name="Johnson S.C."/>
            <person name="Brown L.L."/>
        </authorList>
    </citation>
    <scope>NUCLEOTIDE SEQUENCE [LARGE SCALE GENOMIC DNA]</scope>
    <source>
        <strain>A449</strain>
    </source>
</reference>
<gene>
    <name evidence="1" type="primary">thyA</name>
    <name type="ordered locus">ASA_0676</name>
</gene>
<sequence>MRVYLDLMQKILDEGTVKSDRTGTGTVSLFGHQMRFNLAQGFPLVTTKKCHLRSIIHELLWFLNGDTNTAYLKEQGVSIWDEWADENGDLGPVYGAQWRSWPAADGAVIDQIQRAVDDIKHNPDSRRIIVSAWNVGELDKMALAPCHAFFQFYVADGKLSCQLYQRSCDVFLGLPFNIASYALLTHMMAQQCDLEVGDFVWTGGDVHLYSNHMEQTALQLSREPRPLPQLAIKRKPDSIFDYRFEDFEILGYDPHPGIKAPVAI</sequence>
<proteinExistence type="inferred from homology"/>
<comment type="function">
    <text evidence="1">Catalyzes the reductive methylation of 2'-deoxyuridine-5'-monophosphate (dUMP) to 2'-deoxythymidine-5'-monophosphate (dTMP) while utilizing 5,10-methylenetetrahydrofolate (mTHF) as the methyl donor and reductant in the reaction, yielding dihydrofolate (DHF) as a by-product. This enzymatic reaction provides an intracellular de novo source of dTMP, an essential precursor for DNA biosynthesis.</text>
</comment>
<comment type="catalytic activity">
    <reaction evidence="1">
        <text>dUMP + (6R)-5,10-methylene-5,6,7,8-tetrahydrofolate = 7,8-dihydrofolate + dTMP</text>
        <dbReference type="Rhea" id="RHEA:12104"/>
        <dbReference type="ChEBI" id="CHEBI:15636"/>
        <dbReference type="ChEBI" id="CHEBI:57451"/>
        <dbReference type="ChEBI" id="CHEBI:63528"/>
        <dbReference type="ChEBI" id="CHEBI:246422"/>
        <dbReference type="EC" id="2.1.1.45"/>
    </reaction>
</comment>
<comment type="pathway">
    <text evidence="1">Pyrimidine metabolism; dTTP biosynthesis.</text>
</comment>
<comment type="subunit">
    <text evidence="1">Homodimer.</text>
</comment>
<comment type="subcellular location">
    <subcellularLocation>
        <location evidence="1">Cytoplasm</location>
    </subcellularLocation>
</comment>
<comment type="similarity">
    <text evidence="1">Belongs to the thymidylate synthase family. Bacterial-type ThyA subfamily.</text>
</comment>
<evidence type="ECO:0000255" key="1">
    <source>
        <dbReference type="HAMAP-Rule" id="MF_00008"/>
    </source>
</evidence>
<feature type="chain" id="PRO_1000000570" description="Thymidylate synthase">
    <location>
        <begin position="1"/>
        <end position="264"/>
    </location>
</feature>
<feature type="active site" description="Nucleophile" evidence="1">
    <location>
        <position position="146"/>
    </location>
</feature>
<feature type="binding site" description="in other chain" evidence="1">
    <location>
        <position position="21"/>
    </location>
    <ligand>
        <name>dUMP</name>
        <dbReference type="ChEBI" id="CHEBI:246422"/>
        <note>ligand shared between dimeric partners</note>
    </ligand>
</feature>
<feature type="binding site" evidence="1">
    <location>
        <position position="51"/>
    </location>
    <ligand>
        <name>(6R)-5,10-methylene-5,6,7,8-tetrahydrofolate</name>
        <dbReference type="ChEBI" id="CHEBI:15636"/>
    </ligand>
</feature>
<feature type="binding site" evidence="1">
    <location>
        <begin position="126"/>
        <end position="127"/>
    </location>
    <ligand>
        <name>dUMP</name>
        <dbReference type="ChEBI" id="CHEBI:246422"/>
        <note>ligand shared between dimeric partners</note>
    </ligand>
</feature>
<feature type="binding site" description="in other chain" evidence="1">
    <location>
        <begin position="166"/>
        <end position="169"/>
    </location>
    <ligand>
        <name>dUMP</name>
        <dbReference type="ChEBI" id="CHEBI:246422"/>
        <note>ligand shared between dimeric partners</note>
    </ligand>
</feature>
<feature type="binding site" evidence="1">
    <location>
        <position position="169"/>
    </location>
    <ligand>
        <name>(6R)-5,10-methylene-5,6,7,8-tetrahydrofolate</name>
        <dbReference type="ChEBI" id="CHEBI:15636"/>
    </ligand>
</feature>
<feature type="binding site" description="in other chain" evidence="1">
    <location>
        <position position="177"/>
    </location>
    <ligand>
        <name>dUMP</name>
        <dbReference type="ChEBI" id="CHEBI:246422"/>
        <note>ligand shared between dimeric partners</note>
    </ligand>
</feature>
<feature type="binding site" description="in other chain" evidence="1">
    <location>
        <begin position="207"/>
        <end position="209"/>
    </location>
    <ligand>
        <name>dUMP</name>
        <dbReference type="ChEBI" id="CHEBI:246422"/>
        <note>ligand shared between dimeric partners</note>
    </ligand>
</feature>
<feature type="binding site" evidence="1">
    <location>
        <position position="263"/>
    </location>
    <ligand>
        <name>(6R)-5,10-methylene-5,6,7,8-tetrahydrofolate</name>
        <dbReference type="ChEBI" id="CHEBI:15636"/>
    </ligand>
</feature>
<organism>
    <name type="scientific">Aeromonas salmonicida (strain A449)</name>
    <dbReference type="NCBI Taxonomy" id="382245"/>
    <lineage>
        <taxon>Bacteria</taxon>
        <taxon>Pseudomonadati</taxon>
        <taxon>Pseudomonadota</taxon>
        <taxon>Gammaproteobacteria</taxon>
        <taxon>Aeromonadales</taxon>
        <taxon>Aeromonadaceae</taxon>
        <taxon>Aeromonas</taxon>
    </lineage>
</organism>
<keyword id="KW-0963">Cytoplasm</keyword>
<keyword id="KW-0489">Methyltransferase</keyword>
<keyword id="KW-0545">Nucleotide biosynthesis</keyword>
<keyword id="KW-0808">Transferase</keyword>
<dbReference type="EC" id="2.1.1.45" evidence="1"/>
<dbReference type="EMBL" id="CP000644">
    <property type="protein sequence ID" value="ABO88839.1"/>
    <property type="molecule type" value="Genomic_DNA"/>
</dbReference>
<dbReference type="RefSeq" id="WP_005313492.1">
    <property type="nucleotide sequence ID" value="NC_009348.1"/>
</dbReference>
<dbReference type="SMR" id="A4SIW7"/>
<dbReference type="STRING" id="29491.GCA_000820065_01818"/>
<dbReference type="KEGG" id="asa:ASA_0676"/>
<dbReference type="eggNOG" id="COG0207">
    <property type="taxonomic scope" value="Bacteria"/>
</dbReference>
<dbReference type="HOGENOM" id="CLU_021669_0_0_6"/>
<dbReference type="UniPathway" id="UPA00575"/>
<dbReference type="Proteomes" id="UP000000225">
    <property type="component" value="Chromosome"/>
</dbReference>
<dbReference type="GO" id="GO:0005829">
    <property type="term" value="C:cytosol"/>
    <property type="evidence" value="ECO:0007669"/>
    <property type="project" value="TreeGrafter"/>
</dbReference>
<dbReference type="GO" id="GO:0004799">
    <property type="term" value="F:thymidylate synthase activity"/>
    <property type="evidence" value="ECO:0007669"/>
    <property type="project" value="UniProtKB-UniRule"/>
</dbReference>
<dbReference type="GO" id="GO:0006231">
    <property type="term" value="P:dTMP biosynthetic process"/>
    <property type="evidence" value="ECO:0007669"/>
    <property type="project" value="UniProtKB-UniRule"/>
</dbReference>
<dbReference type="GO" id="GO:0006235">
    <property type="term" value="P:dTTP biosynthetic process"/>
    <property type="evidence" value="ECO:0007669"/>
    <property type="project" value="UniProtKB-UniRule"/>
</dbReference>
<dbReference type="GO" id="GO:0032259">
    <property type="term" value="P:methylation"/>
    <property type="evidence" value="ECO:0007669"/>
    <property type="project" value="UniProtKB-KW"/>
</dbReference>
<dbReference type="CDD" id="cd00351">
    <property type="entry name" value="TS_Pyrimidine_HMase"/>
    <property type="match status" value="1"/>
</dbReference>
<dbReference type="FunFam" id="3.30.572.10:FF:000001">
    <property type="entry name" value="Thymidylate synthase"/>
    <property type="match status" value="1"/>
</dbReference>
<dbReference type="Gene3D" id="3.30.572.10">
    <property type="entry name" value="Thymidylate synthase/dCMP hydroxymethylase domain"/>
    <property type="match status" value="1"/>
</dbReference>
<dbReference type="HAMAP" id="MF_00008">
    <property type="entry name" value="Thymidy_synth_bact"/>
    <property type="match status" value="1"/>
</dbReference>
<dbReference type="InterPro" id="IPR045097">
    <property type="entry name" value="Thymidate_synth/dCMP_Mease"/>
</dbReference>
<dbReference type="InterPro" id="IPR023451">
    <property type="entry name" value="Thymidate_synth/dCMP_Mease_dom"/>
</dbReference>
<dbReference type="InterPro" id="IPR036926">
    <property type="entry name" value="Thymidate_synth/dCMP_Mease_sf"/>
</dbReference>
<dbReference type="InterPro" id="IPR000398">
    <property type="entry name" value="Thymidylate_synthase"/>
</dbReference>
<dbReference type="InterPro" id="IPR020940">
    <property type="entry name" value="Thymidylate_synthase_AS"/>
</dbReference>
<dbReference type="NCBIfam" id="NF002497">
    <property type="entry name" value="PRK01827.1-3"/>
    <property type="match status" value="1"/>
</dbReference>
<dbReference type="NCBIfam" id="NF002499">
    <property type="entry name" value="PRK01827.1-5"/>
    <property type="match status" value="1"/>
</dbReference>
<dbReference type="NCBIfam" id="TIGR03284">
    <property type="entry name" value="thym_sym"/>
    <property type="match status" value="2"/>
</dbReference>
<dbReference type="PANTHER" id="PTHR11548:SF9">
    <property type="entry name" value="THYMIDYLATE SYNTHASE"/>
    <property type="match status" value="1"/>
</dbReference>
<dbReference type="PANTHER" id="PTHR11548">
    <property type="entry name" value="THYMIDYLATE SYNTHASE 1"/>
    <property type="match status" value="1"/>
</dbReference>
<dbReference type="Pfam" id="PF00303">
    <property type="entry name" value="Thymidylat_synt"/>
    <property type="match status" value="1"/>
</dbReference>
<dbReference type="PRINTS" id="PR00108">
    <property type="entry name" value="THYMDSNTHASE"/>
</dbReference>
<dbReference type="SUPFAM" id="SSF55831">
    <property type="entry name" value="Thymidylate synthase/dCMP hydroxymethylase"/>
    <property type="match status" value="1"/>
</dbReference>
<dbReference type="PROSITE" id="PS00091">
    <property type="entry name" value="THYMIDYLATE_SYNTHASE"/>
    <property type="match status" value="1"/>
</dbReference>